<dbReference type="EC" id="4.3.2.10"/>
<dbReference type="EC" id="3.5.1.2"/>
<dbReference type="EMBL" id="BA000037">
    <property type="protein sequence ID" value="BAC93082.1"/>
    <property type="molecule type" value="Genomic_DNA"/>
</dbReference>
<dbReference type="SMR" id="Q7MPP4"/>
<dbReference type="KEGG" id="vvy:VV0318"/>
<dbReference type="HOGENOM" id="CLU_071837_2_0_6"/>
<dbReference type="UniPathway" id="UPA00031">
    <property type="reaction ID" value="UER00010"/>
</dbReference>
<dbReference type="Proteomes" id="UP000002675">
    <property type="component" value="Chromosome I"/>
</dbReference>
<dbReference type="GO" id="GO:0005737">
    <property type="term" value="C:cytoplasm"/>
    <property type="evidence" value="ECO:0007669"/>
    <property type="project" value="UniProtKB-SubCell"/>
</dbReference>
<dbReference type="GO" id="GO:0004359">
    <property type="term" value="F:glutaminase activity"/>
    <property type="evidence" value="ECO:0007669"/>
    <property type="project" value="UniProtKB-EC"/>
</dbReference>
<dbReference type="GO" id="GO:0000107">
    <property type="term" value="F:imidazoleglycerol-phosphate synthase activity"/>
    <property type="evidence" value="ECO:0007669"/>
    <property type="project" value="UniProtKB-UniRule"/>
</dbReference>
<dbReference type="GO" id="GO:0016829">
    <property type="term" value="F:lyase activity"/>
    <property type="evidence" value="ECO:0007669"/>
    <property type="project" value="UniProtKB-KW"/>
</dbReference>
<dbReference type="GO" id="GO:0000105">
    <property type="term" value="P:L-histidine biosynthetic process"/>
    <property type="evidence" value="ECO:0007669"/>
    <property type="project" value="UniProtKB-UniRule"/>
</dbReference>
<dbReference type="CDD" id="cd01748">
    <property type="entry name" value="GATase1_IGP_Synthase"/>
    <property type="match status" value="1"/>
</dbReference>
<dbReference type="Gene3D" id="3.40.50.880">
    <property type="match status" value="1"/>
</dbReference>
<dbReference type="HAMAP" id="MF_00278">
    <property type="entry name" value="HisH"/>
    <property type="match status" value="1"/>
</dbReference>
<dbReference type="InterPro" id="IPR029062">
    <property type="entry name" value="Class_I_gatase-like"/>
</dbReference>
<dbReference type="InterPro" id="IPR017926">
    <property type="entry name" value="GATASE"/>
</dbReference>
<dbReference type="InterPro" id="IPR010139">
    <property type="entry name" value="Imidazole-glycPsynth_HisH"/>
</dbReference>
<dbReference type="NCBIfam" id="TIGR01855">
    <property type="entry name" value="IMP_synth_hisH"/>
    <property type="match status" value="1"/>
</dbReference>
<dbReference type="PANTHER" id="PTHR42701">
    <property type="entry name" value="IMIDAZOLE GLYCEROL PHOSPHATE SYNTHASE SUBUNIT HISH"/>
    <property type="match status" value="1"/>
</dbReference>
<dbReference type="PANTHER" id="PTHR42701:SF1">
    <property type="entry name" value="IMIDAZOLE GLYCEROL PHOSPHATE SYNTHASE SUBUNIT HISH"/>
    <property type="match status" value="1"/>
</dbReference>
<dbReference type="Pfam" id="PF00117">
    <property type="entry name" value="GATase"/>
    <property type="match status" value="1"/>
</dbReference>
<dbReference type="PIRSF" id="PIRSF000495">
    <property type="entry name" value="Amidotransf_hisH"/>
    <property type="match status" value="1"/>
</dbReference>
<dbReference type="SUPFAM" id="SSF52317">
    <property type="entry name" value="Class I glutamine amidotransferase-like"/>
    <property type="match status" value="1"/>
</dbReference>
<dbReference type="PROSITE" id="PS51273">
    <property type="entry name" value="GATASE_TYPE_1"/>
    <property type="match status" value="1"/>
</dbReference>
<organism>
    <name type="scientific">Vibrio vulnificus (strain YJ016)</name>
    <dbReference type="NCBI Taxonomy" id="196600"/>
    <lineage>
        <taxon>Bacteria</taxon>
        <taxon>Pseudomonadati</taxon>
        <taxon>Pseudomonadota</taxon>
        <taxon>Gammaproteobacteria</taxon>
        <taxon>Vibrionales</taxon>
        <taxon>Vibrionaceae</taxon>
        <taxon>Vibrio</taxon>
    </lineage>
</organism>
<evidence type="ECO:0000250" key="1"/>
<feature type="chain" id="PRO_0000152445" description="Imidazole glycerol phosphate synthase subunit HisH 2">
    <location>
        <begin position="1"/>
        <end position="214"/>
    </location>
</feature>
<feature type="domain" description="Glutamine amidotransferase type-1">
    <location>
        <begin position="2"/>
        <end position="210"/>
    </location>
</feature>
<feature type="active site" description="Nucleophile" evidence="1">
    <location>
        <position position="82"/>
    </location>
</feature>
<feature type="active site" evidence="1">
    <location>
        <position position="185"/>
    </location>
</feature>
<feature type="active site" evidence="1">
    <location>
        <position position="187"/>
    </location>
</feature>
<sequence>MKIVIIDYDMGNVRSIENAINHIGDYTIIVSGEPDTIRSADCLILPGVGAFPDAMKKLEQQKLIDLLTEEVVVRRKPVLGICLGMQLLFESSEEIQLTKGLGWIPGKVEYMRPGNDLRVPHVGWNSLILKKENSLFDYLQDDKDFYFVHSLWVNCPEKYKLATFEYGIEMTASVQYENIVGMQFHPEKSQRNGLEAIRSFLDWVKIQKLGVSHA</sequence>
<keyword id="KW-0028">Amino-acid biosynthesis</keyword>
<keyword id="KW-0963">Cytoplasm</keyword>
<keyword id="KW-0315">Glutamine amidotransferase</keyword>
<keyword id="KW-0368">Histidine biosynthesis</keyword>
<keyword id="KW-0378">Hydrolase</keyword>
<keyword id="KW-0456">Lyase</keyword>
<comment type="function">
    <text evidence="1">IGPS catalyzes the conversion of PRFAR and glutamine to IGP, AICAR and glutamate. The HisH subunit provides the glutamine amidotransferase activity that produces the ammonia necessary to HisF for the synthesis of IGP and AICAR (By similarity).</text>
</comment>
<comment type="catalytic activity">
    <reaction>
        <text>5-[(5-phospho-1-deoxy-D-ribulos-1-ylimino)methylamino]-1-(5-phospho-beta-D-ribosyl)imidazole-4-carboxamide + L-glutamine = D-erythro-1-(imidazol-4-yl)glycerol 3-phosphate + 5-amino-1-(5-phospho-beta-D-ribosyl)imidazole-4-carboxamide + L-glutamate + H(+)</text>
        <dbReference type="Rhea" id="RHEA:24793"/>
        <dbReference type="ChEBI" id="CHEBI:15378"/>
        <dbReference type="ChEBI" id="CHEBI:29985"/>
        <dbReference type="ChEBI" id="CHEBI:58278"/>
        <dbReference type="ChEBI" id="CHEBI:58359"/>
        <dbReference type="ChEBI" id="CHEBI:58475"/>
        <dbReference type="ChEBI" id="CHEBI:58525"/>
        <dbReference type="EC" id="4.3.2.10"/>
    </reaction>
</comment>
<comment type="catalytic activity">
    <reaction>
        <text>L-glutamine + H2O = L-glutamate + NH4(+)</text>
        <dbReference type="Rhea" id="RHEA:15889"/>
        <dbReference type="ChEBI" id="CHEBI:15377"/>
        <dbReference type="ChEBI" id="CHEBI:28938"/>
        <dbReference type="ChEBI" id="CHEBI:29985"/>
        <dbReference type="ChEBI" id="CHEBI:58359"/>
        <dbReference type="EC" id="3.5.1.2"/>
    </reaction>
</comment>
<comment type="pathway">
    <text>Amino-acid biosynthesis; L-histidine biosynthesis; L-histidine from 5-phospho-alpha-D-ribose 1-diphosphate: step 5/9.</text>
</comment>
<comment type="subunit">
    <text evidence="1">Heterodimer of HisH and HisF.</text>
</comment>
<comment type="subcellular location">
    <subcellularLocation>
        <location evidence="1">Cytoplasm</location>
    </subcellularLocation>
</comment>
<protein>
    <recommendedName>
        <fullName>Imidazole glycerol phosphate synthase subunit HisH 2</fullName>
        <ecNumber>4.3.2.10</ecNumber>
    </recommendedName>
    <alternativeName>
        <fullName>IGP synthase glutaminase subunit 2</fullName>
        <ecNumber>3.5.1.2</ecNumber>
    </alternativeName>
    <alternativeName>
        <fullName>IGP synthase subunit HisH 2</fullName>
    </alternativeName>
    <alternativeName>
        <fullName>ImGP synthase subunit HisH 2</fullName>
        <shortName>IGPS subunit HisH 2</shortName>
    </alternativeName>
</protein>
<proteinExistence type="inferred from homology"/>
<accession>Q7MPP4</accession>
<name>HIS52_VIBVY</name>
<reference key="1">
    <citation type="journal article" date="2003" name="Genome Res.">
        <title>Comparative genome analysis of Vibrio vulnificus, a marine pathogen.</title>
        <authorList>
            <person name="Chen C.-Y."/>
            <person name="Wu K.-M."/>
            <person name="Chang Y.-C."/>
            <person name="Chang C.-H."/>
            <person name="Tsai H.-C."/>
            <person name="Liao T.-L."/>
            <person name="Liu Y.-M."/>
            <person name="Chen H.-J."/>
            <person name="Shen A.B.-T."/>
            <person name="Li J.-C."/>
            <person name="Su T.-L."/>
            <person name="Shao C.-P."/>
            <person name="Lee C.-T."/>
            <person name="Hor L.-I."/>
            <person name="Tsai S.-F."/>
        </authorList>
    </citation>
    <scope>NUCLEOTIDE SEQUENCE [LARGE SCALE GENOMIC DNA]</scope>
    <source>
        <strain>YJ016</strain>
    </source>
</reference>
<gene>
    <name type="primary">hisH2</name>
    <name type="ordered locus">VV0318</name>
</gene>